<gene>
    <name evidence="7 11" type="primary">BHP</name>
    <name evidence="6" type="synonym">STY12</name>
    <name evidence="9" type="ordered locus">At4g18950</name>
    <name evidence="10" type="ORF">F13C5.120</name>
</gene>
<reference key="1">
    <citation type="journal article" date="1999" name="Nature">
        <title>Sequence and analysis of chromosome 4 of the plant Arabidopsis thaliana.</title>
        <authorList>
            <person name="Mayer K.F.X."/>
            <person name="Schueller C."/>
            <person name="Wambutt R."/>
            <person name="Murphy G."/>
            <person name="Volckaert G."/>
            <person name="Pohl T."/>
            <person name="Duesterhoeft A."/>
            <person name="Stiekema W."/>
            <person name="Entian K.-D."/>
            <person name="Terryn N."/>
            <person name="Harris B."/>
            <person name="Ansorge W."/>
            <person name="Brandt P."/>
            <person name="Grivell L.A."/>
            <person name="Rieger M."/>
            <person name="Weichselgartner M."/>
            <person name="de Simone V."/>
            <person name="Obermaier B."/>
            <person name="Mache R."/>
            <person name="Mueller M."/>
            <person name="Kreis M."/>
            <person name="Delseny M."/>
            <person name="Puigdomenech P."/>
            <person name="Watson M."/>
            <person name="Schmidtheini T."/>
            <person name="Reichert B."/>
            <person name="Portetelle D."/>
            <person name="Perez-Alonso M."/>
            <person name="Boutry M."/>
            <person name="Bancroft I."/>
            <person name="Vos P."/>
            <person name="Hoheisel J."/>
            <person name="Zimmermann W."/>
            <person name="Wedler H."/>
            <person name="Ridley P."/>
            <person name="Langham S.-A."/>
            <person name="McCullagh B."/>
            <person name="Bilham L."/>
            <person name="Robben J."/>
            <person name="van der Schueren J."/>
            <person name="Grymonprez B."/>
            <person name="Chuang Y.-J."/>
            <person name="Vandenbussche F."/>
            <person name="Braeken M."/>
            <person name="Weltjens I."/>
            <person name="Voet M."/>
            <person name="Bastiaens I."/>
            <person name="Aert R."/>
            <person name="Defoor E."/>
            <person name="Weitzenegger T."/>
            <person name="Bothe G."/>
            <person name="Ramsperger U."/>
            <person name="Hilbert H."/>
            <person name="Braun M."/>
            <person name="Holzer E."/>
            <person name="Brandt A."/>
            <person name="Peters S."/>
            <person name="van Staveren M."/>
            <person name="Dirkse W."/>
            <person name="Mooijman P."/>
            <person name="Klein Lankhorst R."/>
            <person name="Rose M."/>
            <person name="Hauf J."/>
            <person name="Koetter P."/>
            <person name="Berneiser S."/>
            <person name="Hempel S."/>
            <person name="Feldpausch M."/>
            <person name="Lamberth S."/>
            <person name="Van den Daele H."/>
            <person name="De Keyser A."/>
            <person name="Buysshaert C."/>
            <person name="Gielen J."/>
            <person name="Villarroel R."/>
            <person name="De Clercq R."/>
            <person name="van Montagu M."/>
            <person name="Rogers J."/>
            <person name="Cronin A."/>
            <person name="Quail M.A."/>
            <person name="Bray-Allen S."/>
            <person name="Clark L."/>
            <person name="Doggett J."/>
            <person name="Hall S."/>
            <person name="Kay M."/>
            <person name="Lennard N."/>
            <person name="McLay K."/>
            <person name="Mayes R."/>
            <person name="Pettett A."/>
            <person name="Rajandream M.A."/>
            <person name="Lyne M."/>
            <person name="Benes V."/>
            <person name="Rechmann S."/>
            <person name="Borkova D."/>
            <person name="Bloecker H."/>
            <person name="Scharfe M."/>
            <person name="Grimm M."/>
            <person name="Loehnert T.-H."/>
            <person name="Dose S."/>
            <person name="de Haan M."/>
            <person name="Maarse A.C."/>
            <person name="Schaefer M."/>
            <person name="Mueller-Auer S."/>
            <person name="Gabel C."/>
            <person name="Fuchs M."/>
            <person name="Fartmann B."/>
            <person name="Granderath K."/>
            <person name="Dauner D."/>
            <person name="Herzl A."/>
            <person name="Neumann S."/>
            <person name="Argiriou A."/>
            <person name="Vitale D."/>
            <person name="Liguori R."/>
            <person name="Piravandi E."/>
            <person name="Massenet O."/>
            <person name="Quigley F."/>
            <person name="Clabauld G."/>
            <person name="Muendlein A."/>
            <person name="Felber R."/>
            <person name="Schnabl S."/>
            <person name="Hiller R."/>
            <person name="Schmidt W."/>
            <person name="Lecharny A."/>
            <person name="Aubourg S."/>
            <person name="Chefdor F."/>
            <person name="Cooke R."/>
            <person name="Berger C."/>
            <person name="Monfort A."/>
            <person name="Casacuberta E."/>
            <person name="Gibbons T."/>
            <person name="Weber N."/>
            <person name="Vandenbol M."/>
            <person name="Bargues M."/>
            <person name="Terol J."/>
            <person name="Torres A."/>
            <person name="Perez-Perez A."/>
            <person name="Purnelle B."/>
            <person name="Bent E."/>
            <person name="Johnson S."/>
            <person name="Tacon D."/>
            <person name="Jesse T."/>
            <person name="Heijnen L."/>
            <person name="Schwarz S."/>
            <person name="Scholler P."/>
            <person name="Heber S."/>
            <person name="Francs P."/>
            <person name="Bielke C."/>
            <person name="Frishman D."/>
            <person name="Haase D."/>
            <person name="Lemcke K."/>
            <person name="Mewes H.-W."/>
            <person name="Stocker S."/>
            <person name="Zaccaria P."/>
            <person name="Bevan M."/>
            <person name="Wilson R.K."/>
            <person name="de la Bastide M."/>
            <person name="Habermann K."/>
            <person name="Parnell L."/>
            <person name="Dedhia N."/>
            <person name="Gnoj L."/>
            <person name="Schutz K."/>
            <person name="Huang E."/>
            <person name="Spiegel L."/>
            <person name="Sekhon M."/>
            <person name="Murray J."/>
            <person name="Sheet P."/>
            <person name="Cordes M."/>
            <person name="Abu-Threideh J."/>
            <person name="Stoneking T."/>
            <person name="Kalicki J."/>
            <person name="Graves T."/>
            <person name="Harmon G."/>
            <person name="Edwards J."/>
            <person name="Latreille P."/>
            <person name="Courtney L."/>
            <person name="Cloud J."/>
            <person name="Abbott A."/>
            <person name="Scott K."/>
            <person name="Johnson D."/>
            <person name="Minx P."/>
            <person name="Bentley D."/>
            <person name="Fulton B."/>
            <person name="Miller N."/>
            <person name="Greco T."/>
            <person name="Kemp K."/>
            <person name="Kramer J."/>
            <person name="Fulton L."/>
            <person name="Mardis E."/>
            <person name="Dante M."/>
            <person name="Pepin K."/>
            <person name="Hillier L.W."/>
            <person name="Nelson J."/>
            <person name="Spieth J."/>
            <person name="Ryan E."/>
            <person name="Andrews S."/>
            <person name="Geisel C."/>
            <person name="Layman D."/>
            <person name="Du H."/>
            <person name="Ali J."/>
            <person name="Berghoff A."/>
            <person name="Jones K."/>
            <person name="Drone K."/>
            <person name="Cotton M."/>
            <person name="Joshu C."/>
            <person name="Antonoiu B."/>
            <person name="Zidanic M."/>
            <person name="Strong C."/>
            <person name="Sun H."/>
            <person name="Lamar B."/>
            <person name="Yordan C."/>
            <person name="Ma P."/>
            <person name="Zhong J."/>
            <person name="Preston R."/>
            <person name="Vil D."/>
            <person name="Shekher M."/>
            <person name="Matero A."/>
            <person name="Shah R."/>
            <person name="Swaby I.K."/>
            <person name="O'Shaughnessy A."/>
            <person name="Rodriguez M."/>
            <person name="Hoffman J."/>
            <person name="Till S."/>
            <person name="Granat S."/>
            <person name="Shohdy N."/>
            <person name="Hasegawa A."/>
            <person name="Hameed A."/>
            <person name="Lodhi M."/>
            <person name="Johnson A."/>
            <person name="Chen E."/>
            <person name="Marra M.A."/>
            <person name="Martienssen R."/>
            <person name="McCombie W.R."/>
        </authorList>
    </citation>
    <scope>NUCLEOTIDE SEQUENCE [LARGE SCALE GENOMIC DNA]</scope>
    <source>
        <strain>cv. Columbia</strain>
    </source>
</reference>
<reference key="2">
    <citation type="journal article" date="2017" name="Plant J.">
        <title>Araport11: a complete reannotation of the Arabidopsis thaliana reference genome.</title>
        <authorList>
            <person name="Cheng C.Y."/>
            <person name="Krishnakumar V."/>
            <person name="Chan A.P."/>
            <person name="Thibaud-Nissen F."/>
            <person name="Schobel S."/>
            <person name="Town C.D."/>
        </authorList>
    </citation>
    <scope>GENOME REANNOTATION</scope>
    <source>
        <strain>cv. Columbia</strain>
    </source>
</reference>
<reference key="3">
    <citation type="journal article" date="2003" name="Science">
        <title>Empirical analysis of transcriptional activity in the Arabidopsis genome.</title>
        <authorList>
            <person name="Yamada K."/>
            <person name="Lim J."/>
            <person name="Dale J.M."/>
            <person name="Chen H."/>
            <person name="Shinn P."/>
            <person name="Palm C.J."/>
            <person name="Southwick A.M."/>
            <person name="Wu H.C."/>
            <person name="Kim C.J."/>
            <person name="Nguyen M."/>
            <person name="Pham P.K."/>
            <person name="Cheuk R.F."/>
            <person name="Karlin-Newmann G."/>
            <person name="Liu S.X."/>
            <person name="Lam B."/>
            <person name="Sakano H."/>
            <person name="Wu T."/>
            <person name="Yu G."/>
            <person name="Miranda M."/>
            <person name="Quach H.L."/>
            <person name="Tripp M."/>
            <person name="Chang C.H."/>
            <person name="Lee J.M."/>
            <person name="Toriumi M.J."/>
            <person name="Chan M.M."/>
            <person name="Tang C.C."/>
            <person name="Onodera C.S."/>
            <person name="Deng J.M."/>
            <person name="Akiyama K."/>
            <person name="Ansari Y."/>
            <person name="Arakawa T."/>
            <person name="Banh J."/>
            <person name="Banno F."/>
            <person name="Bowser L."/>
            <person name="Brooks S.Y."/>
            <person name="Carninci P."/>
            <person name="Chao Q."/>
            <person name="Choy N."/>
            <person name="Enju A."/>
            <person name="Goldsmith A.D."/>
            <person name="Gurjal M."/>
            <person name="Hansen N.F."/>
            <person name="Hayashizaki Y."/>
            <person name="Johnson-Hopson C."/>
            <person name="Hsuan V.W."/>
            <person name="Iida K."/>
            <person name="Karnes M."/>
            <person name="Khan S."/>
            <person name="Koesema E."/>
            <person name="Ishida J."/>
            <person name="Jiang P.X."/>
            <person name="Jones T."/>
            <person name="Kawai J."/>
            <person name="Kamiya A."/>
            <person name="Meyers C."/>
            <person name="Nakajima M."/>
            <person name="Narusaka M."/>
            <person name="Seki M."/>
            <person name="Sakurai T."/>
            <person name="Satou M."/>
            <person name="Tamse R."/>
            <person name="Vaysberg M."/>
            <person name="Wallender E.K."/>
            <person name="Wong C."/>
            <person name="Yamamura Y."/>
            <person name="Yuan S."/>
            <person name="Shinozaki K."/>
            <person name="Davis R.W."/>
            <person name="Theologis A."/>
            <person name="Ecker J.R."/>
        </authorList>
    </citation>
    <scope>NUCLEOTIDE SEQUENCE [LARGE SCALE MRNA] (ISOFORM 1)</scope>
    <source>
        <strain>cv. Columbia</strain>
    </source>
</reference>
<reference key="4">
    <citation type="journal article" date="2009" name="DNA Res.">
        <title>Analysis of multiple occurrences of alternative splicing events in Arabidopsis thaliana using novel sequenced full-length cDNAs.</title>
        <authorList>
            <person name="Iida K."/>
            <person name="Fukami-Kobayashi K."/>
            <person name="Toyoda A."/>
            <person name="Sakaki Y."/>
            <person name="Kobayashi M."/>
            <person name="Seki M."/>
            <person name="Shinozaki K."/>
        </authorList>
    </citation>
    <scope>NUCLEOTIDE SEQUENCE [LARGE SCALE MRNA] (ISOFORM 2)</scope>
    <source>
        <strain>cv. Columbia</strain>
    </source>
</reference>
<reference key="5">
    <citation type="submission" date="2002-03" db="EMBL/GenBank/DDBJ databases">
        <title>Full-length cDNA from Arabidopsis thaliana.</title>
        <authorList>
            <person name="Brover V.V."/>
            <person name="Troukhan M.E."/>
            <person name="Alexandrov N.A."/>
            <person name="Lu Y.-P."/>
            <person name="Flavell R.B."/>
            <person name="Feldmann K.A."/>
        </authorList>
    </citation>
    <scope>NUCLEOTIDE SEQUENCE [LARGE SCALE MRNA] (ISOFORM 1)</scope>
</reference>
<reference key="6">
    <citation type="journal article" date="2002" name="Trends Plant Sci.">
        <title>Mitogen-activated protein kinase cascades in plants: a new nomenclature.</title>
        <authorList>
            <consortium name="MAPK group"/>
        </authorList>
    </citation>
    <scope>GENE FAMILY</scope>
</reference>
<reference key="7">
    <citation type="journal article" date="2006" name="Plant Mol. Biol.">
        <title>Genome-wide analysis and experimentation of plant serine/threonine/tyrosine-specific protein kinases.</title>
        <authorList>
            <person name="Rudrabhatla P."/>
            <person name="Reddy M.M."/>
            <person name="Rajasekharan R."/>
        </authorList>
    </citation>
    <scope>GENE FAMILY</scope>
    <scope>NOMENCLATURE</scope>
</reference>
<reference key="8">
    <citation type="journal article" date="2009" name="J. Proteomics">
        <title>Phosphoproteomic analysis of nuclei-enriched fractions from Arabidopsis thaliana.</title>
        <authorList>
            <person name="Jones A.M.E."/>
            <person name="MacLean D."/>
            <person name="Studholme D.J."/>
            <person name="Serna-Sanz A."/>
            <person name="Andreasson E."/>
            <person name="Rathjen J.P."/>
            <person name="Peck S.C."/>
        </authorList>
    </citation>
    <scope>IDENTIFICATION BY MASS SPECTROMETRY [LARGE SCALE ANALYSIS]</scope>
</reference>
<reference key="9">
    <citation type="journal article" date="2009" name="Plant Physiol.">
        <title>Large-scale Arabidopsis phosphoproteome profiling reveals novel chloroplast kinase substrates and phosphorylation networks.</title>
        <authorList>
            <person name="Reiland S."/>
            <person name="Messerli G."/>
            <person name="Baerenfaller K."/>
            <person name="Gerrits B."/>
            <person name="Endler A."/>
            <person name="Grossmann J."/>
            <person name="Gruissem W."/>
            <person name="Baginsky S."/>
        </authorList>
    </citation>
    <scope>IDENTIFICATION BY MASS SPECTROMETRY [LARGE SCALE ANALYSIS]</scope>
</reference>
<reference key="10">
    <citation type="journal article" date="2012" name="Mol. Cell. Proteomics">
        <title>Comparative large-scale characterisation of plant vs. mammal proteins reveals similar and idiosyncratic N-alpha acetylation features.</title>
        <authorList>
            <person name="Bienvenut W.V."/>
            <person name="Sumpton D."/>
            <person name="Martinez A."/>
            <person name="Lilla S."/>
            <person name="Espagne C."/>
            <person name="Meinnel T."/>
            <person name="Giglione C."/>
        </authorList>
    </citation>
    <scope>IDENTIFICATION BY MASS SPECTROMETRY [LARGE SCALE ANALYSIS]</scope>
</reference>
<reference key="11">
    <citation type="journal article" date="2017" name="Sci. Rep.">
        <title>A Raf-like protein kinase BHP mediates blue light-dependent stomatal opening.</title>
        <authorList>
            <person name="Hayashi M."/>
            <person name="Inoue S.-I."/>
            <person name="Ueno Y."/>
            <person name="Kinoshita T."/>
        </authorList>
    </citation>
    <scope>FUNCTION</scope>
    <scope>MUTAGENESIS OF ASP-299</scope>
    <scope>DISRUPTION PHENOTYPE</scope>
    <scope>SUBCELLULAR LOCATION</scope>
    <scope>TISSUE SPECIFICITY</scope>
    <scope>INTERACTION WITH BLUS1; PHOT1 AND PHOT2</scope>
    <source>
        <strain>cv. Columbia</strain>
    </source>
</reference>
<accession>Q93Z30</accession>
<accession>C0Z2R6</accession>
<accession>O49409</accession>
<proteinExistence type="evidence at protein level"/>
<organism>
    <name type="scientific">Arabidopsis thaliana</name>
    <name type="common">Mouse-ear cress</name>
    <dbReference type="NCBI Taxonomy" id="3702"/>
    <lineage>
        <taxon>Eukaryota</taxon>
        <taxon>Viridiplantae</taxon>
        <taxon>Streptophyta</taxon>
        <taxon>Embryophyta</taxon>
        <taxon>Tracheophyta</taxon>
        <taxon>Spermatophyta</taxon>
        <taxon>Magnoliopsida</taxon>
        <taxon>eudicotyledons</taxon>
        <taxon>Gunneridae</taxon>
        <taxon>Pentapetalae</taxon>
        <taxon>rosids</taxon>
        <taxon>malvids</taxon>
        <taxon>Brassicales</taxon>
        <taxon>Brassicaceae</taxon>
        <taxon>Camelineae</taxon>
        <taxon>Arabidopsis</taxon>
    </lineage>
</organism>
<protein>
    <recommendedName>
        <fullName evidence="6">Serine/threonine-protein kinase 12</fullName>
        <ecNumber evidence="1">2.7.11.1</ecNumber>
    </recommendedName>
    <alternativeName>
        <fullName evidence="7">Protein BLUE LIGHT-DEPENDENT H(+)-ATPASE PHOSPHORYLATION</fullName>
    </alternativeName>
</protein>
<dbReference type="EC" id="2.7.11.1" evidence="1"/>
<dbReference type="EMBL" id="AL021711">
    <property type="protein sequence ID" value="CAA16752.1"/>
    <property type="status" value="ALT_SEQ"/>
    <property type="molecule type" value="Genomic_DNA"/>
</dbReference>
<dbReference type="EMBL" id="AL161549">
    <property type="protein sequence ID" value="CAB78897.1"/>
    <property type="status" value="ALT_SEQ"/>
    <property type="molecule type" value="Genomic_DNA"/>
</dbReference>
<dbReference type="EMBL" id="CP002687">
    <property type="protein sequence ID" value="AEE84110.1"/>
    <property type="molecule type" value="Genomic_DNA"/>
</dbReference>
<dbReference type="EMBL" id="CP002687">
    <property type="protein sequence ID" value="ANM68061.1"/>
    <property type="molecule type" value="Genomic_DNA"/>
</dbReference>
<dbReference type="EMBL" id="AY058189">
    <property type="protein sequence ID" value="AAL25602.1"/>
    <property type="molecule type" value="mRNA"/>
</dbReference>
<dbReference type="EMBL" id="AY142014">
    <property type="protein sequence ID" value="AAM98278.1"/>
    <property type="molecule type" value="mRNA"/>
</dbReference>
<dbReference type="EMBL" id="AK318880">
    <property type="protein sequence ID" value="BAH56995.1"/>
    <property type="molecule type" value="mRNA"/>
</dbReference>
<dbReference type="EMBL" id="AY087826">
    <property type="protein sequence ID" value="AAM65379.1"/>
    <property type="molecule type" value="mRNA"/>
</dbReference>
<dbReference type="PIR" id="T05032">
    <property type="entry name" value="T05032"/>
</dbReference>
<dbReference type="RefSeq" id="NP_001329842.1">
    <molecule id="Q93Z30-2"/>
    <property type="nucleotide sequence ID" value="NM_001341308.1"/>
</dbReference>
<dbReference type="RefSeq" id="NP_567568.1">
    <molecule id="Q93Z30-1"/>
    <property type="nucleotide sequence ID" value="NM_118012.5"/>
</dbReference>
<dbReference type="SMR" id="Q93Z30"/>
<dbReference type="FunCoup" id="Q93Z30">
    <property type="interactions" value="712"/>
</dbReference>
<dbReference type="IntAct" id="Q93Z30">
    <property type="interactions" value="8"/>
</dbReference>
<dbReference type="STRING" id="3702.AT4G18950.1"/>
<dbReference type="iPTMnet" id="Q93Z30"/>
<dbReference type="PaxDb" id="3702-AT4G18950.1"/>
<dbReference type="ProteomicsDB" id="187087"/>
<dbReference type="ProteomicsDB" id="187291"/>
<dbReference type="EnsemblPlants" id="AT4G18950.1">
    <molecule id="Q93Z30-1"/>
    <property type="protein sequence ID" value="AT4G18950.1"/>
    <property type="gene ID" value="AT4G18950"/>
</dbReference>
<dbReference type="EnsemblPlants" id="AT4G18950.2">
    <molecule id="Q93Z30-2"/>
    <property type="protein sequence ID" value="AT4G18950.2"/>
    <property type="gene ID" value="AT4G18950"/>
</dbReference>
<dbReference type="GeneID" id="827630"/>
<dbReference type="Gramene" id="AT4G18950.1">
    <molecule id="Q93Z30-1"/>
    <property type="protein sequence ID" value="AT4G18950.1"/>
    <property type="gene ID" value="AT4G18950"/>
</dbReference>
<dbReference type="Gramene" id="AT4G18950.2">
    <molecule id="Q93Z30-2"/>
    <property type="protein sequence ID" value="AT4G18950.2"/>
    <property type="gene ID" value="AT4G18950"/>
</dbReference>
<dbReference type="KEGG" id="ath:AT4G18950"/>
<dbReference type="Araport" id="AT4G18950"/>
<dbReference type="TAIR" id="AT4G18950">
    <property type="gene designation" value="BHP"/>
</dbReference>
<dbReference type="eggNOG" id="KOG0192">
    <property type="taxonomic scope" value="Eukaryota"/>
</dbReference>
<dbReference type="HOGENOM" id="CLU_000288_7_35_1"/>
<dbReference type="OMA" id="EECWNDK"/>
<dbReference type="Proteomes" id="UP000006548">
    <property type="component" value="Chromosome 4"/>
</dbReference>
<dbReference type="ExpressionAtlas" id="Q93Z30">
    <property type="expression patterns" value="baseline and differential"/>
</dbReference>
<dbReference type="GO" id="GO:0005737">
    <property type="term" value="C:cytoplasm"/>
    <property type="evidence" value="ECO:0007005"/>
    <property type="project" value="TAIR"/>
</dbReference>
<dbReference type="GO" id="GO:0005829">
    <property type="term" value="C:cytosol"/>
    <property type="evidence" value="ECO:0000314"/>
    <property type="project" value="TAIR"/>
</dbReference>
<dbReference type="GO" id="GO:0005634">
    <property type="term" value="C:nucleus"/>
    <property type="evidence" value="ECO:0007005"/>
    <property type="project" value="TAIR"/>
</dbReference>
<dbReference type="GO" id="GO:0005524">
    <property type="term" value="F:ATP binding"/>
    <property type="evidence" value="ECO:0007669"/>
    <property type="project" value="UniProtKB-KW"/>
</dbReference>
<dbReference type="GO" id="GO:0004672">
    <property type="term" value="F:protein kinase activity"/>
    <property type="evidence" value="ECO:0000315"/>
    <property type="project" value="TAIR"/>
</dbReference>
<dbReference type="GO" id="GO:0004712">
    <property type="term" value="F:protein serine/threonine/tyrosine kinase activity"/>
    <property type="evidence" value="ECO:0000250"/>
    <property type="project" value="TAIR"/>
</dbReference>
<dbReference type="GO" id="GO:0007229">
    <property type="term" value="P:integrin-mediated signaling pathway"/>
    <property type="evidence" value="ECO:0007669"/>
    <property type="project" value="UniProtKB-KW"/>
</dbReference>
<dbReference type="GO" id="GO:0010119">
    <property type="term" value="P:regulation of stomatal movement"/>
    <property type="evidence" value="ECO:0000315"/>
    <property type="project" value="TAIR"/>
</dbReference>
<dbReference type="GO" id="GO:0009637">
    <property type="term" value="P:response to blue light"/>
    <property type="evidence" value="ECO:0000315"/>
    <property type="project" value="UniProtKB"/>
</dbReference>
<dbReference type="CDD" id="cd13999">
    <property type="entry name" value="STKc_MAP3K-like"/>
    <property type="match status" value="1"/>
</dbReference>
<dbReference type="FunFam" id="1.10.510.10:FF:000355">
    <property type="entry name" value="Integrin-linked protein kinase family"/>
    <property type="match status" value="1"/>
</dbReference>
<dbReference type="FunFam" id="1.25.40.20:FF:000439">
    <property type="entry name" value="Integrin-linked protein kinase family"/>
    <property type="match status" value="1"/>
</dbReference>
<dbReference type="FunFam" id="3.30.200.20:FF:000180">
    <property type="entry name" value="serine/threonine-protein kinase STY46-like"/>
    <property type="match status" value="1"/>
</dbReference>
<dbReference type="Gene3D" id="1.25.40.20">
    <property type="entry name" value="Ankyrin repeat-containing domain"/>
    <property type="match status" value="1"/>
</dbReference>
<dbReference type="Gene3D" id="3.30.200.20">
    <property type="entry name" value="Phosphorylase Kinase, domain 1"/>
    <property type="match status" value="1"/>
</dbReference>
<dbReference type="Gene3D" id="1.10.510.10">
    <property type="entry name" value="Transferase(Phosphotransferase) domain 1"/>
    <property type="match status" value="1"/>
</dbReference>
<dbReference type="InterPro" id="IPR002110">
    <property type="entry name" value="Ankyrin_rpt"/>
</dbReference>
<dbReference type="InterPro" id="IPR036770">
    <property type="entry name" value="Ankyrin_rpt-contain_sf"/>
</dbReference>
<dbReference type="InterPro" id="IPR011009">
    <property type="entry name" value="Kinase-like_dom_sf"/>
</dbReference>
<dbReference type="InterPro" id="IPR000719">
    <property type="entry name" value="Prot_kinase_dom"/>
</dbReference>
<dbReference type="InterPro" id="IPR001245">
    <property type="entry name" value="Ser-Thr/Tyr_kinase_cat_dom"/>
</dbReference>
<dbReference type="InterPro" id="IPR051681">
    <property type="entry name" value="Ser/Thr_Kinases-Pseudokinases"/>
</dbReference>
<dbReference type="PANTHER" id="PTHR44329:SF140">
    <property type="entry name" value="INACTIVE PROTEIN TYROSINE KINASE PTKL"/>
    <property type="match status" value="1"/>
</dbReference>
<dbReference type="PANTHER" id="PTHR44329">
    <property type="entry name" value="SERINE/THREONINE-PROTEIN KINASE TNNI3K-RELATED"/>
    <property type="match status" value="1"/>
</dbReference>
<dbReference type="Pfam" id="PF12796">
    <property type="entry name" value="Ank_2"/>
    <property type="match status" value="1"/>
</dbReference>
<dbReference type="Pfam" id="PF07714">
    <property type="entry name" value="PK_Tyr_Ser-Thr"/>
    <property type="match status" value="1"/>
</dbReference>
<dbReference type="PIRSF" id="PIRSF000654">
    <property type="entry name" value="Integrin-linked_kinase"/>
    <property type="match status" value="1"/>
</dbReference>
<dbReference type="PRINTS" id="PR00109">
    <property type="entry name" value="TYRKINASE"/>
</dbReference>
<dbReference type="SMART" id="SM00248">
    <property type="entry name" value="ANK"/>
    <property type="match status" value="3"/>
</dbReference>
<dbReference type="SUPFAM" id="SSF48403">
    <property type="entry name" value="Ankyrin repeat"/>
    <property type="match status" value="1"/>
</dbReference>
<dbReference type="SUPFAM" id="SSF56112">
    <property type="entry name" value="Protein kinase-like (PK-like)"/>
    <property type="match status" value="1"/>
</dbReference>
<dbReference type="PROSITE" id="PS50297">
    <property type="entry name" value="ANK_REP_REGION"/>
    <property type="match status" value="1"/>
</dbReference>
<dbReference type="PROSITE" id="PS50088">
    <property type="entry name" value="ANK_REPEAT"/>
    <property type="match status" value="2"/>
</dbReference>
<dbReference type="PROSITE" id="PS50011">
    <property type="entry name" value="PROTEIN_KINASE_DOM"/>
    <property type="match status" value="1"/>
</dbReference>
<name>BHP_ARATH</name>
<evidence type="ECO:0000250" key="1">
    <source>
        <dbReference type="UniProtKB" id="Q9ZQ31"/>
    </source>
</evidence>
<evidence type="ECO:0000255" key="2"/>
<evidence type="ECO:0000255" key="3">
    <source>
        <dbReference type="PROSITE-ProRule" id="PRU00159"/>
    </source>
</evidence>
<evidence type="ECO:0000256" key="4">
    <source>
        <dbReference type="SAM" id="MobiDB-lite"/>
    </source>
</evidence>
<evidence type="ECO:0000269" key="5">
    <source>
    </source>
</evidence>
<evidence type="ECO:0000303" key="6">
    <source>
    </source>
</evidence>
<evidence type="ECO:0000303" key="7">
    <source>
    </source>
</evidence>
<evidence type="ECO:0000305" key="8"/>
<evidence type="ECO:0000312" key="9">
    <source>
        <dbReference type="Araport" id="AT4G18950"/>
    </source>
</evidence>
<evidence type="ECO:0000312" key="10">
    <source>
        <dbReference type="EMBL" id="CAA16752.1"/>
    </source>
</evidence>
<evidence type="ECO:0000312" key="11">
    <source>
        <dbReference type="TAIR" id="AT4G18950"/>
    </source>
</evidence>
<keyword id="KW-0025">Alternative splicing</keyword>
<keyword id="KW-0040">ANK repeat</keyword>
<keyword id="KW-0067">ATP-binding</keyword>
<keyword id="KW-0963">Cytoplasm</keyword>
<keyword id="KW-0401">Integrin</keyword>
<keyword id="KW-0418">Kinase</keyword>
<keyword id="KW-0547">Nucleotide-binding</keyword>
<keyword id="KW-1185">Reference proteome</keyword>
<keyword id="KW-0677">Repeat</keyword>
<keyword id="KW-0808">Transferase</keyword>
<comment type="function">
    <text evidence="1 5">Serine/threonine protein kinase that phosphorylates proteins on serine and threonine residues (By similarity). Mediates blue light-dependent stomatal opening in guard cells by promoting plasma membrane-type ATPases (AHA1 and AHA2) phosphorylation (PubMed:28358053).</text>
</comment>
<comment type="catalytic activity">
    <reaction evidence="1">
        <text>L-seryl-[protein] + ATP = O-phospho-L-seryl-[protein] + ADP + H(+)</text>
        <dbReference type="Rhea" id="RHEA:17989"/>
        <dbReference type="Rhea" id="RHEA-COMP:9863"/>
        <dbReference type="Rhea" id="RHEA-COMP:11604"/>
        <dbReference type="ChEBI" id="CHEBI:15378"/>
        <dbReference type="ChEBI" id="CHEBI:29999"/>
        <dbReference type="ChEBI" id="CHEBI:30616"/>
        <dbReference type="ChEBI" id="CHEBI:83421"/>
        <dbReference type="ChEBI" id="CHEBI:456216"/>
        <dbReference type="EC" id="2.7.11.1"/>
    </reaction>
</comment>
<comment type="catalytic activity">
    <reaction evidence="1">
        <text>L-threonyl-[protein] + ATP = O-phospho-L-threonyl-[protein] + ADP + H(+)</text>
        <dbReference type="Rhea" id="RHEA:46608"/>
        <dbReference type="Rhea" id="RHEA-COMP:11060"/>
        <dbReference type="Rhea" id="RHEA-COMP:11605"/>
        <dbReference type="ChEBI" id="CHEBI:15378"/>
        <dbReference type="ChEBI" id="CHEBI:30013"/>
        <dbReference type="ChEBI" id="CHEBI:30616"/>
        <dbReference type="ChEBI" id="CHEBI:61977"/>
        <dbReference type="ChEBI" id="CHEBI:456216"/>
        <dbReference type="EC" id="2.7.11.1"/>
    </reaction>
</comment>
<comment type="subunit">
    <text evidence="5">Interacts with BLUS1, PHOT1 and PHOT2.</text>
</comment>
<comment type="subcellular location">
    <subcellularLocation>
        <location evidence="5">Cytoplasm</location>
        <location evidence="5">Cytosol</location>
    </subcellularLocation>
</comment>
<comment type="alternative products">
    <event type="alternative splicing"/>
    <isoform>
        <id>Q93Z30-1</id>
        <name>1</name>
        <sequence type="displayed"/>
    </isoform>
    <isoform>
        <id>Q93Z30-2</id>
        <name>2</name>
        <sequence type="described" ref="VSP_062245 VSP_062246"/>
    </isoform>
</comment>
<comment type="tissue specificity">
    <text evidence="5">Accumulates in leaves, stems, petioles and roots, especially in guard cells.</text>
</comment>
<comment type="disruption phenotype">
    <text evidence="5">Impaired stomatal opening and plasma membrane-type ATPases (AHA1 and AHA2) phosphorylation in response to blue light in guard cells.</text>
</comment>
<comment type="similarity">
    <text evidence="3">Belongs to the protein kinase superfamily. Ser/Thr protein kinase family.</text>
</comment>
<comment type="sequence caution" evidence="8">
    <conflict type="erroneous gene model prediction">
        <sequence resource="EMBL-CDS" id="CAA16752"/>
    </conflict>
</comment>
<comment type="sequence caution" evidence="8">
    <conflict type="erroneous gene model prediction">
        <sequence resource="EMBL-CDS" id="CAB78897"/>
    </conflict>
</comment>
<sequence>MEEDYQQPRFTIGRQSSMAPEKIPEPSVHSEEEVFEDGEEIDGGVRLMYLANEGDIEGIKELIDSGIDANYRDIDDRTALHVAACQGLKDVVELLLDRKAEVDPKDRWGSTPFADAIFYKNIDVIKILEIHGAKHPMAPMHVKTAREVPEYEINPSELDFTQSKEITKGTYCMAMWRGIQVAVKKLDDEVLSDDDQVRKFHDELALLQRLRHPNIVQFLGAVTQSNPMMIVTEYLPRGDLRELLKRKGQLKPATAVRYALDIARGMSYLHEIKGDPIIHRDLEPSNILRDDSGHLKVADFGVSKLVTVKEDKPFTCQDISCRYIAPEVFTSEEYDTKADVFSFALIVQEMIEGRMPFAEKEDSEASEAYAGKHRPLFKAPSKNYPHGLKTLIEECWHEKPAKRPTFREIIKRLESILHHMGHKRQWRMRPLTCFQNFEHKKKHNWDLSSHDGSSSGSHL</sequence>
<feature type="chain" id="PRO_0000459725" description="Serine/threonine-protein kinase 12">
    <location>
        <begin position="1"/>
        <end position="459"/>
    </location>
</feature>
<feature type="repeat" description="ANK 1" evidence="2">
    <location>
        <begin position="42"/>
        <end position="71"/>
    </location>
</feature>
<feature type="repeat" description="ANK 2" evidence="2">
    <location>
        <begin position="75"/>
        <end position="104"/>
    </location>
</feature>
<feature type="domain" description="Protein kinase" evidence="3">
    <location>
        <begin position="102"/>
        <end position="417"/>
    </location>
</feature>
<feature type="repeat" description="ANK 3" evidence="2">
    <location>
        <begin position="108"/>
        <end position="137"/>
    </location>
</feature>
<feature type="region of interest" description="Disordered" evidence="4">
    <location>
        <begin position="1"/>
        <end position="30"/>
    </location>
</feature>
<feature type="active site" description="Proton acceptor" evidence="3">
    <location>
        <position position="281"/>
    </location>
</feature>
<feature type="binding site" evidence="3">
    <location>
        <begin position="108"/>
        <end position="116"/>
    </location>
    <ligand>
        <name>ATP</name>
        <dbReference type="ChEBI" id="CHEBI:30616"/>
    </ligand>
</feature>
<feature type="binding site" evidence="3">
    <location>
        <position position="184"/>
    </location>
    <ligand>
        <name>ATP</name>
        <dbReference type="ChEBI" id="CHEBI:30616"/>
    </ligand>
</feature>
<feature type="splice variant" id="VSP_062245" description="In isoform 2.">
    <original>MRPLTCFQNFE</original>
    <variation>VCFSISLSNTH</variation>
    <location>
        <begin position="428"/>
        <end position="438"/>
    </location>
</feature>
<feature type="splice variant" id="VSP_062246" description="In isoform 2.">
    <location>
        <begin position="439"/>
        <end position="459"/>
    </location>
</feature>
<feature type="mutagenesis site" description="Lost kinase activity and altered stomatal opening in response to blue light." evidence="5">
    <original>D</original>
    <variation>N</variation>
    <location>
        <position position="299"/>
    </location>
</feature>